<organism>
    <name type="scientific">Gloeobacter violaceus (strain ATCC 29082 / PCC 7421)</name>
    <dbReference type="NCBI Taxonomy" id="251221"/>
    <lineage>
        <taxon>Bacteria</taxon>
        <taxon>Bacillati</taxon>
        <taxon>Cyanobacteriota</taxon>
        <taxon>Cyanophyceae</taxon>
        <taxon>Gloeobacterales</taxon>
        <taxon>Gloeobacteraceae</taxon>
        <taxon>Gloeobacter</taxon>
    </lineage>
</organism>
<evidence type="ECO:0000255" key="1">
    <source>
        <dbReference type="HAMAP-Rule" id="MF_00081"/>
    </source>
</evidence>
<dbReference type="EMBL" id="BA000045">
    <property type="protein sequence ID" value="BAC90212.1"/>
    <property type="molecule type" value="Genomic_DNA"/>
</dbReference>
<dbReference type="RefSeq" id="NP_925217.1">
    <property type="nucleotide sequence ID" value="NC_005125.1"/>
</dbReference>
<dbReference type="RefSeq" id="WP_011142268.1">
    <property type="nucleotide sequence ID" value="NC_005125.1"/>
</dbReference>
<dbReference type="SMR" id="Q7NIB2"/>
<dbReference type="STRING" id="251221.gene:10759766"/>
<dbReference type="EnsemblBacteria" id="BAC90212">
    <property type="protein sequence ID" value="BAC90212"/>
    <property type="gene ID" value="BAC90212"/>
</dbReference>
<dbReference type="KEGG" id="gvi:gll2271"/>
<dbReference type="PATRIC" id="fig|251221.4.peg.2306"/>
<dbReference type="eggNOG" id="COG1420">
    <property type="taxonomic scope" value="Bacteria"/>
</dbReference>
<dbReference type="HOGENOM" id="CLU_050019_1_0_3"/>
<dbReference type="InParanoid" id="Q7NIB2"/>
<dbReference type="OrthoDB" id="9783139at2"/>
<dbReference type="PhylomeDB" id="Q7NIB2"/>
<dbReference type="Proteomes" id="UP000000557">
    <property type="component" value="Chromosome"/>
</dbReference>
<dbReference type="GO" id="GO:0003677">
    <property type="term" value="F:DNA binding"/>
    <property type="evidence" value="ECO:0007669"/>
    <property type="project" value="InterPro"/>
</dbReference>
<dbReference type="GO" id="GO:0045892">
    <property type="term" value="P:negative regulation of DNA-templated transcription"/>
    <property type="evidence" value="ECO:0000318"/>
    <property type="project" value="GO_Central"/>
</dbReference>
<dbReference type="Gene3D" id="3.30.450.40">
    <property type="match status" value="1"/>
</dbReference>
<dbReference type="Gene3D" id="3.30.390.60">
    <property type="entry name" value="Heat-inducible transcription repressor hrca homolog, domain 3"/>
    <property type="match status" value="1"/>
</dbReference>
<dbReference type="Gene3D" id="1.10.10.10">
    <property type="entry name" value="Winged helix-like DNA-binding domain superfamily/Winged helix DNA-binding domain"/>
    <property type="match status" value="1"/>
</dbReference>
<dbReference type="HAMAP" id="MF_00081">
    <property type="entry name" value="HrcA"/>
    <property type="match status" value="1"/>
</dbReference>
<dbReference type="InterPro" id="IPR029016">
    <property type="entry name" value="GAF-like_dom_sf"/>
</dbReference>
<dbReference type="InterPro" id="IPR002571">
    <property type="entry name" value="HrcA"/>
</dbReference>
<dbReference type="InterPro" id="IPR021153">
    <property type="entry name" value="HrcA_C"/>
</dbReference>
<dbReference type="InterPro" id="IPR036388">
    <property type="entry name" value="WH-like_DNA-bd_sf"/>
</dbReference>
<dbReference type="InterPro" id="IPR036390">
    <property type="entry name" value="WH_DNA-bd_sf"/>
</dbReference>
<dbReference type="InterPro" id="IPR023120">
    <property type="entry name" value="WHTH_transcript_rep_HrcA_IDD"/>
</dbReference>
<dbReference type="NCBIfam" id="TIGR00331">
    <property type="entry name" value="hrcA"/>
    <property type="match status" value="1"/>
</dbReference>
<dbReference type="PANTHER" id="PTHR34824">
    <property type="entry name" value="HEAT-INDUCIBLE TRANSCRIPTION REPRESSOR HRCA"/>
    <property type="match status" value="1"/>
</dbReference>
<dbReference type="PANTHER" id="PTHR34824:SF1">
    <property type="entry name" value="HEAT-INDUCIBLE TRANSCRIPTION REPRESSOR HRCA"/>
    <property type="match status" value="1"/>
</dbReference>
<dbReference type="Pfam" id="PF01628">
    <property type="entry name" value="HrcA"/>
    <property type="match status" value="1"/>
</dbReference>
<dbReference type="PIRSF" id="PIRSF005485">
    <property type="entry name" value="HrcA"/>
    <property type="match status" value="1"/>
</dbReference>
<dbReference type="SUPFAM" id="SSF55781">
    <property type="entry name" value="GAF domain-like"/>
    <property type="match status" value="1"/>
</dbReference>
<dbReference type="SUPFAM" id="SSF46785">
    <property type="entry name" value="Winged helix' DNA-binding domain"/>
    <property type="match status" value="1"/>
</dbReference>
<sequence>MSSFSFESSARLPLNPRFKQILHATVKSYIDTAEPVGSKMLTQQYNFGLSSATIRNAMAVLESWGLLFQPHTSAGRIPSDSGYRVYVDELISPPTELIQQMRAALAENLGERQDLESLLQGATRLLATLSGCVALITAPQSVFVSVRHLQIVHIGEGRALVIVVTDALQTRSFLLDLPQPEMAEQLETLNNFLNLQLQNRRLDDLNAAAVEAMGGEFHWYTDFLRGLIALLQRVLQPPTGQLYVSGVGEILKQPEFAEPERIQAIVQLLEVERERLGPLISPTQRHSRQIVVRIGAENPLGPMQFCSLVSSTYYLNEVPVGSVGVLGPTRLPYDRAIASVQAASDHLCQVMQAEDEPHRW</sequence>
<keyword id="KW-1185">Reference proteome</keyword>
<keyword id="KW-0678">Repressor</keyword>
<keyword id="KW-0346">Stress response</keyword>
<keyword id="KW-0804">Transcription</keyword>
<keyword id="KW-0805">Transcription regulation</keyword>
<protein>
    <recommendedName>
        <fullName evidence="1">Heat-inducible transcription repressor HrcA</fullName>
    </recommendedName>
</protein>
<proteinExistence type="inferred from homology"/>
<feature type="chain" id="PRO_0000182482" description="Heat-inducible transcription repressor HrcA">
    <location>
        <begin position="1"/>
        <end position="360"/>
    </location>
</feature>
<reference key="1">
    <citation type="journal article" date="2003" name="DNA Res.">
        <title>Complete genome structure of Gloeobacter violaceus PCC 7421, a cyanobacterium that lacks thylakoids.</title>
        <authorList>
            <person name="Nakamura Y."/>
            <person name="Kaneko T."/>
            <person name="Sato S."/>
            <person name="Mimuro M."/>
            <person name="Miyashita H."/>
            <person name="Tsuchiya T."/>
            <person name="Sasamoto S."/>
            <person name="Watanabe A."/>
            <person name="Kawashima K."/>
            <person name="Kishida Y."/>
            <person name="Kiyokawa C."/>
            <person name="Kohara M."/>
            <person name="Matsumoto M."/>
            <person name="Matsuno A."/>
            <person name="Nakazaki N."/>
            <person name="Shimpo S."/>
            <person name="Takeuchi C."/>
            <person name="Yamada M."/>
            <person name="Tabata S."/>
        </authorList>
    </citation>
    <scope>NUCLEOTIDE SEQUENCE [LARGE SCALE GENOMIC DNA]</scope>
    <source>
        <strain>ATCC 29082 / PCC 7421</strain>
    </source>
</reference>
<gene>
    <name evidence="1" type="primary">hrcA</name>
    <name type="ordered locus">gll2271</name>
</gene>
<accession>Q7NIB2</accession>
<name>HRCA_GLOVI</name>
<comment type="function">
    <text evidence="1">Negative regulator of class I heat shock genes (grpE-dnaK-dnaJ and groELS operons). Prevents heat-shock induction of these operons.</text>
</comment>
<comment type="similarity">
    <text evidence="1">Belongs to the HrcA family.</text>
</comment>